<keyword id="KW-0001">2Fe-2S</keyword>
<keyword id="KW-0004">4Fe-4S</keyword>
<keyword id="KW-0093">Biotin biosynthesis</keyword>
<keyword id="KW-0408">Iron</keyword>
<keyword id="KW-0411">Iron-sulfur</keyword>
<keyword id="KW-0479">Metal-binding</keyword>
<keyword id="KW-0949">S-adenosyl-L-methionine</keyword>
<keyword id="KW-0808">Transferase</keyword>
<proteinExistence type="inferred from homology"/>
<feature type="chain" id="PRO_0000381282" description="Biotin synthase">
    <location>
        <begin position="1"/>
        <end position="275"/>
    </location>
</feature>
<feature type="domain" description="Radical SAM core" evidence="2">
    <location>
        <begin position="1"/>
        <end position="217"/>
    </location>
</feature>
<feature type="binding site" evidence="1">
    <location>
        <position position="13"/>
    </location>
    <ligand>
        <name>[4Fe-4S] cluster</name>
        <dbReference type="ChEBI" id="CHEBI:49883"/>
        <note>4Fe-4S-S-AdoMet</note>
    </ligand>
</feature>
<feature type="binding site" evidence="1">
    <location>
        <position position="17"/>
    </location>
    <ligand>
        <name>[4Fe-4S] cluster</name>
        <dbReference type="ChEBI" id="CHEBI:49883"/>
        <note>4Fe-4S-S-AdoMet</note>
    </ligand>
</feature>
<feature type="binding site" evidence="1">
    <location>
        <position position="20"/>
    </location>
    <ligand>
        <name>[4Fe-4S] cluster</name>
        <dbReference type="ChEBI" id="CHEBI:49883"/>
        <note>4Fe-4S-S-AdoMet</note>
    </ligand>
</feature>
<feature type="binding site" evidence="1">
    <location>
        <position position="57"/>
    </location>
    <ligand>
        <name>[2Fe-2S] cluster</name>
        <dbReference type="ChEBI" id="CHEBI:190135"/>
    </ligand>
</feature>
<feature type="binding site" evidence="1">
    <location>
        <position position="92"/>
    </location>
    <ligand>
        <name>[2Fe-2S] cluster</name>
        <dbReference type="ChEBI" id="CHEBI:190135"/>
    </ligand>
</feature>
<feature type="binding site" evidence="1">
    <location>
        <position position="150"/>
    </location>
    <ligand>
        <name>[2Fe-2S] cluster</name>
        <dbReference type="ChEBI" id="CHEBI:190135"/>
    </ligand>
</feature>
<feature type="binding site" evidence="1">
    <location>
        <position position="217"/>
    </location>
    <ligand>
        <name>[2Fe-2S] cluster</name>
        <dbReference type="ChEBI" id="CHEBI:190135"/>
    </ligand>
</feature>
<evidence type="ECO:0000255" key="1">
    <source>
        <dbReference type="HAMAP-Rule" id="MF_01694"/>
    </source>
</evidence>
<evidence type="ECO:0000255" key="2">
    <source>
        <dbReference type="PROSITE-ProRule" id="PRU01266"/>
    </source>
</evidence>
<sequence>MLCAICNVSSGNCAEDCAYCTQSAHIKADIPKFKQKNLEQILNEAKIASKNYALGFCLVTSGLGLDDKKLEFICEAATMLRKETPNLMLIACNGSASYESLKELKKVGIFSYNHNLETSREFFPQICTTHSWDDRFNTNLNAKKAGLELCCGGIYGLGESQDDRLSFRASLKELNPFSSPINFFIPNPALKIKQPLLSTDEALEIIRDTAKTLPQCRIMVAGGREIVLGDRQYEILENGASAIVIGDYLTTSGEVASKDIEELRNRGFEFASQCH</sequence>
<comment type="function">
    <text evidence="1">Catalyzes the conversion of dethiobiotin (DTB) to biotin by the insertion of a sulfur atom into dethiobiotin via a radical-based mechanism.</text>
</comment>
<comment type="catalytic activity">
    <reaction evidence="1">
        <text>(4R,5S)-dethiobiotin + (sulfur carrier)-SH + 2 reduced [2Fe-2S]-[ferredoxin] + 2 S-adenosyl-L-methionine = (sulfur carrier)-H + biotin + 2 5'-deoxyadenosine + 2 L-methionine + 2 oxidized [2Fe-2S]-[ferredoxin]</text>
        <dbReference type="Rhea" id="RHEA:22060"/>
        <dbReference type="Rhea" id="RHEA-COMP:10000"/>
        <dbReference type="Rhea" id="RHEA-COMP:10001"/>
        <dbReference type="Rhea" id="RHEA-COMP:14737"/>
        <dbReference type="Rhea" id="RHEA-COMP:14739"/>
        <dbReference type="ChEBI" id="CHEBI:17319"/>
        <dbReference type="ChEBI" id="CHEBI:29917"/>
        <dbReference type="ChEBI" id="CHEBI:33737"/>
        <dbReference type="ChEBI" id="CHEBI:33738"/>
        <dbReference type="ChEBI" id="CHEBI:57586"/>
        <dbReference type="ChEBI" id="CHEBI:57844"/>
        <dbReference type="ChEBI" id="CHEBI:59789"/>
        <dbReference type="ChEBI" id="CHEBI:64428"/>
        <dbReference type="ChEBI" id="CHEBI:149473"/>
        <dbReference type="EC" id="2.8.1.6"/>
    </reaction>
</comment>
<comment type="cofactor">
    <cofactor evidence="1">
        <name>[4Fe-4S] cluster</name>
        <dbReference type="ChEBI" id="CHEBI:49883"/>
    </cofactor>
    <text evidence="1">Binds 1 [4Fe-4S] cluster. The cluster is coordinated with 3 cysteines and an exchangeable S-adenosyl-L-methionine.</text>
</comment>
<comment type="cofactor">
    <cofactor evidence="1">
        <name>[2Fe-2S] cluster</name>
        <dbReference type="ChEBI" id="CHEBI:190135"/>
    </cofactor>
    <text evidence="1">Binds 1 [2Fe-2S] cluster. The cluster is coordinated with 3 cysteines and 1 arginine.</text>
</comment>
<comment type="pathway">
    <text evidence="1">Cofactor biosynthesis; biotin biosynthesis; biotin from 7,8-diaminononanoate: step 2/2.</text>
</comment>
<comment type="subunit">
    <text evidence="1">Homodimer.</text>
</comment>
<comment type="similarity">
    <text evidence="1">Belongs to the radical SAM superfamily. Biotin synthase family.</text>
</comment>
<organism>
    <name type="scientific">Campylobacter fetus subsp. fetus (strain 82-40)</name>
    <dbReference type="NCBI Taxonomy" id="360106"/>
    <lineage>
        <taxon>Bacteria</taxon>
        <taxon>Pseudomonadati</taxon>
        <taxon>Campylobacterota</taxon>
        <taxon>Epsilonproteobacteria</taxon>
        <taxon>Campylobacterales</taxon>
        <taxon>Campylobacteraceae</taxon>
        <taxon>Campylobacter</taxon>
    </lineage>
</organism>
<dbReference type="EC" id="2.8.1.6" evidence="1"/>
<dbReference type="EMBL" id="CP000487">
    <property type="protein sequence ID" value="ABK82310.1"/>
    <property type="molecule type" value="Genomic_DNA"/>
</dbReference>
<dbReference type="SMR" id="A0RME8"/>
<dbReference type="KEGG" id="cff:CFF8240_0176"/>
<dbReference type="eggNOG" id="COG0502">
    <property type="taxonomic scope" value="Bacteria"/>
</dbReference>
<dbReference type="HOGENOM" id="CLU_033172_2_1_7"/>
<dbReference type="UniPathway" id="UPA00078">
    <property type="reaction ID" value="UER00162"/>
</dbReference>
<dbReference type="Proteomes" id="UP000000760">
    <property type="component" value="Chromosome"/>
</dbReference>
<dbReference type="GO" id="GO:0051537">
    <property type="term" value="F:2 iron, 2 sulfur cluster binding"/>
    <property type="evidence" value="ECO:0007669"/>
    <property type="project" value="UniProtKB-KW"/>
</dbReference>
<dbReference type="GO" id="GO:0051539">
    <property type="term" value="F:4 iron, 4 sulfur cluster binding"/>
    <property type="evidence" value="ECO:0007669"/>
    <property type="project" value="UniProtKB-KW"/>
</dbReference>
<dbReference type="GO" id="GO:0004076">
    <property type="term" value="F:biotin synthase activity"/>
    <property type="evidence" value="ECO:0007669"/>
    <property type="project" value="UniProtKB-UniRule"/>
</dbReference>
<dbReference type="GO" id="GO:0005506">
    <property type="term" value="F:iron ion binding"/>
    <property type="evidence" value="ECO:0007669"/>
    <property type="project" value="UniProtKB-UniRule"/>
</dbReference>
<dbReference type="GO" id="GO:0009102">
    <property type="term" value="P:biotin biosynthetic process"/>
    <property type="evidence" value="ECO:0007669"/>
    <property type="project" value="UniProtKB-UniRule"/>
</dbReference>
<dbReference type="CDD" id="cd01335">
    <property type="entry name" value="Radical_SAM"/>
    <property type="match status" value="1"/>
</dbReference>
<dbReference type="Gene3D" id="3.20.20.70">
    <property type="entry name" value="Aldolase class I"/>
    <property type="match status" value="1"/>
</dbReference>
<dbReference type="HAMAP" id="MF_01694">
    <property type="entry name" value="BioB"/>
    <property type="match status" value="1"/>
</dbReference>
<dbReference type="InterPro" id="IPR013785">
    <property type="entry name" value="Aldolase_TIM"/>
</dbReference>
<dbReference type="InterPro" id="IPR010722">
    <property type="entry name" value="BATS_dom"/>
</dbReference>
<dbReference type="InterPro" id="IPR002684">
    <property type="entry name" value="Biotin_synth/BioAB"/>
</dbReference>
<dbReference type="InterPro" id="IPR024177">
    <property type="entry name" value="Biotin_synthase"/>
</dbReference>
<dbReference type="InterPro" id="IPR006638">
    <property type="entry name" value="Elp3/MiaA/NifB-like_rSAM"/>
</dbReference>
<dbReference type="InterPro" id="IPR007197">
    <property type="entry name" value="rSAM"/>
</dbReference>
<dbReference type="NCBIfam" id="TIGR00433">
    <property type="entry name" value="bioB"/>
    <property type="match status" value="1"/>
</dbReference>
<dbReference type="NCBIfam" id="NF006308">
    <property type="entry name" value="PRK08508.1"/>
    <property type="match status" value="1"/>
</dbReference>
<dbReference type="PANTHER" id="PTHR22976">
    <property type="entry name" value="BIOTIN SYNTHASE"/>
    <property type="match status" value="1"/>
</dbReference>
<dbReference type="PANTHER" id="PTHR22976:SF2">
    <property type="entry name" value="BIOTIN SYNTHASE, MITOCHONDRIAL"/>
    <property type="match status" value="1"/>
</dbReference>
<dbReference type="Pfam" id="PF06968">
    <property type="entry name" value="BATS"/>
    <property type="match status" value="1"/>
</dbReference>
<dbReference type="Pfam" id="PF04055">
    <property type="entry name" value="Radical_SAM"/>
    <property type="match status" value="1"/>
</dbReference>
<dbReference type="PIRSF" id="PIRSF001619">
    <property type="entry name" value="Biotin_synth"/>
    <property type="match status" value="1"/>
</dbReference>
<dbReference type="SFLD" id="SFLDG01278">
    <property type="entry name" value="biotin_synthase_like"/>
    <property type="match status" value="1"/>
</dbReference>
<dbReference type="SFLD" id="SFLDS00029">
    <property type="entry name" value="Radical_SAM"/>
    <property type="match status" value="1"/>
</dbReference>
<dbReference type="SMART" id="SM00876">
    <property type="entry name" value="BATS"/>
    <property type="match status" value="1"/>
</dbReference>
<dbReference type="SMART" id="SM00729">
    <property type="entry name" value="Elp3"/>
    <property type="match status" value="1"/>
</dbReference>
<dbReference type="SUPFAM" id="SSF102114">
    <property type="entry name" value="Radical SAM enzymes"/>
    <property type="match status" value="1"/>
</dbReference>
<dbReference type="PROSITE" id="PS51918">
    <property type="entry name" value="RADICAL_SAM"/>
    <property type="match status" value="1"/>
</dbReference>
<accession>A0RME8</accession>
<gene>
    <name evidence="1" type="primary">bioB</name>
    <name type="ordered locus">CFF8240_0176</name>
</gene>
<name>BIOB_CAMFF</name>
<reference key="1">
    <citation type="submission" date="2006-11" db="EMBL/GenBank/DDBJ databases">
        <title>Sequence of Campylobacter fetus subsp. fetus 82-40.</title>
        <authorList>
            <person name="Fouts D.E."/>
            <person name="Nelson K.E."/>
        </authorList>
    </citation>
    <scope>NUCLEOTIDE SEQUENCE [LARGE SCALE GENOMIC DNA]</scope>
    <source>
        <strain>82-40</strain>
    </source>
</reference>
<protein>
    <recommendedName>
        <fullName evidence="1">Biotin synthase</fullName>
        <ecNumber evidence="1">2.8.1.6</ecNumber>
    </recommendedName>
</protein>